<feature type="chain" id="PRO_0000085907" description="Serine/threonine-protein kinase CTR1">
    <location>
        <begin position="1"/>
        <end position="821"/>
    </location>
</feature>
<feature type="domain" description="Protein kinase" evidence="1">
    <location>
        <begin position="551"/>
        <end position="809"/>
    </location>
</feature>
<feature type="region of interest" description="Disordered" evidence="3">
    <location>
        <begin position="1"/>
        <end position="76"/>
    </location>
</feature>
<feature type="region of interest" description="Disordered" evidence="3">
    <location>
        <begin position="481"/>
        <end position="502"/>
    </location>
</feature>
<feature type="compositionally biased region" description="Low complexity" evidence="3">
    <location>
        <begin position="14"/>
        <end position="25"/>
    </location>
</feature>
<feature type="compositionally biased region" description="Polar residues" evidence="3">
    <location>
        <begin position="35"/>
        <end position="49"/>
    </location>
</feature>
<feature type="active site" description="Proton acceptor" evidence="1 2">
    <location>
        <position position="676"/>
    </location>
</feature>
<feature type="binding site" evidence="1">
    <location>
        <begin position="557"/>
        <end position="565"/>
    </location>
    <ligand>
        <name>ATP</name>
        <dbReference type="ChEBI" id="CHEBI:30616"/>
    </ligand>
</feature>
<feature type="binding site" evidence="1">
    <location>
        <position position="578"/>
    </location>
    <ligand>
        <name>ATP</name>
        <dbReference type="ChEBI" id="CHEBI:30616"/>
    </ligand>
</feature>
<feature type="mutagenesis site" description="In ctr1-4; exhibits ethylene-treated phenotype." evidence="6">
    <original>E</original>
    <variation>K</variation>
    <location>
        <position position="596"/>
    </location>
</feature>
<feature type="mutagenesis site" description="In ctr1-1; exhibits ethylene-treated phenotype." evidence="6">
    <original>D</original>
    <variation>E</variation>
    <location>
        <position position="694"/>
    </location>
</feature>
<feature type="helix" evidence="11">
    <location>
        <begin position="548"/>
        <end position="550"/>
    </location>
</feature>
<feature type="strand" evidence="11">
    <location>
        <begin position="551"/>
        <end position="559"/>
    </location>
</feature>
<feature type="strand" evidence="11">
    <location>
        <begin position="561"/>
        <end position="570"/>
    </location>
</feature>
<feature type="strand" evidence="11">
    <location>
        <begin position="573"/>
        <end position="580"/>
    </location>
</feature>
<feature type="helix" evidence="11">
    <location>
        <begin position="587"/>
        <end position="602"/>
    </location>
</feature>
<feature type="strand" evidence="11">
    <location>
        <begin position="611"/>
        <end position="615"/>
    </location>
</feature>
<feature type="strand" evidence="12">
    <location>
        <begin position="617"/>
        <end position="619"/>
    </location>
</feature>
<feature type="strand" evidence="11">
    <location>
        <begin position="622"/>
        <end position="626"/>
    </location>
</feature>
<feature type="helix" evidence="11">
    <location>
        <begin position="633"/>
        <end position="638"/>
    </location>
</feature>
<feature type="helix" evidence="11">
    <location>
        <begin position="642"/>
        <end position="645"/>
    </location>
</feature>
<feature type="helix" evidence="11">
    <location>
        <begin position="648"/>
        <end position="666"/>
    </location>
</feature>
<feature type="strand" evidence="11">
    <location>
        <begin position="668"/>
        <end position="670"/>
    </location>
</feature>
<feature type="helix" evidence="11">
    <location>
        <begin position="679"/>
        <end position="681"/>
    </location>
</feature>
<feature type="strand" evidence="11">
    <location>
        <begin position="682"/>
        <end position="684"/>
    </location>
</feature>
<feature type="strand" evidence="11">
    <location>
        <begin position="690"/>
        <end position="692"/>
    </location>
</feature>
<feature type="strand" evidence="12">
    <location>
        <begin position="703"/>
        <end position="705"/>
    </location>
</feature>
<feature type="turn" evidence="12">
    <location>
        <begin position="715"/>
        <end position="717"/>
    </location>
</feature>
<feature type="helix" evidence="11">
    <location>
        <begin position="720"/>
        <end position="723"/>
    </location>
</feature>
<feature type="helix" evidence="11">
    <location>
        <begin position="732"/>
        <end position="746"/>
    </location>
</feature>
<feature type="turn" evidence="11">
    <location>
        <begin position="750"/>
        <end position="753"/>
    </location>
</feature>
<feature type="helix" evidence="11">
    <location>
        <begin position="756"/>
        <end position="765"/>
    </location>
</feature>
<feature type="helix" evidence="11">
    <location>
        <begin position="778"/>
        <end position="787"/>
    </location>
</feature>
<feature type="helix" evidence="11">
    <location>
        <begin position="792"/>
        <end position="794"/>
    </location>
</feature>
<feature type="helix" evidence="11">
    <location>
        <begin position="798"/>
        <end position="809"/>
    </location>
</feature>
<proteinExistence type="evidence at protein level"/>
<reference key="1">
    <citation type="journal article" date="1993" name="Cell">
        <title>CTR1, a negative regulator of the ethylene response pathway in Arabidopsis, encodes a member of the raf family of protein kinases.</title>
        <authorList>
            <person name="Kieber J.J."/>
            <person name="Rothenberg M."/>
            <person name="Roman G."/>
            <person name="Feldmann K.A."/>
            <person name="Ecker J.R."/>
        </authorList>
    </citation>
    <scope>NUCLEOTIDE SEQUENCE [MRNA]</scope>
    <scope>DISRUPTION PHENOTYPE</scope>
    <scope>FUNCTION</scope>
    <scope>TISSUE SPECIFICITY</scope>
    <scope>MUTAGENESIS OF GLU-596 AND ASP-694</scope>
    <source>
        <strain>cv. Columbia</strain>
        <tissue>Seedling</tissue>
    </source>
</reference>
<reference key="2">
    <citation type="journal article" date="2000" name="Nature">
        <title>Sequence and analysis of chromosome 5 of the plant Arabidopsis thaliana.</title>
        <authorList>
            <person name="Tabata S."/>
            <person name="Kaneko T."/>
            <person name="Nakamura Y."/>
            <person name="Kotani H."/>
            <person name="Kato T."/>
            <person name="Asamizu E."/>
            <person name="Miyajima N."/>
            <person name="Sasamoto S."/>
            <person name="Kimura T."/>
            <person name="Hosouchi T."/>
            <person name="Kawashima K."/>
            <person name="Kohara M."/>
            <person name="Matsumoto M."/>
            <person name="Matsuno A."/>
            <person name="Muraki A."/>
            <person name="Nakayama S."/>
            <person name="Nakazaki N."/>
            <person name="Naruo K."/>
            <person name="Okumura S."/>
            <person name="Shinpo S."/>
            <person name="Takeuchi C."/>
            <person name="Wada T."/>
            <person name="Watanabe A."/>
            <person name="Yamada M."/>
            <person name="Yasuda M."/>
            <person name="Sato S."/>
            <person name="de la Bastide M."/>
            <person name="Huang E."/>
            <person name="Spiegel L."/>
            <person name="Gnoj L."/>
            <person name="O'Shaughnessy A."/>
            <person name="Preston R."/>
            <person name="Habermann K."/>
            <person name="Murray J."/>
            <person name="Johnson D."/>
            <person name="Rohlfing T."/>
            <person name="Nelson J."/>
            <person name="Stoneking T."/>
            <person name="Pepin K."/>
            <person name="Spieth J."/>
            <person name="Sekhon M."/>
            <person name="Armstrong J."/>
            <person name="Becker M."/>
            <person name="Belter E."/>
            <person name="Cordum H."/>
            <person name="Cordes M."/>
            <person name="Courtney L."/>
            <person name="Courtney W."/>
            <person name="Dante M."/>
            <person name="Du H."/>
            <person name="Edwards J."/>
            <person name="Fryman J."/>
            <person name="Haakensen B."/>
            <person name="Lamar E."/>
            <person name="Latreille P."/>
            <person name="Leonard S."/>
            <person name="Meyer R."/>
            <person name="Mulvaney E."/>
            <person name="Ozersky P."/>
            <person name="Riley A."/>
            <person name="Strowmatt C."/>
            <person name="Wagner-McPherson C."/>
            <person name="Wollam A."/>
            <person name="Yoakum M."/>
            <person name="Bell M."/>
            <person name="Dedhia N."/>
            <person name="Parnell L."/>
            <person name="Shah R."/>
            <person name="Rodriguez M."/>
            <person name="Hoon See L."/>
            <person name="Vil D."/>
            <person name="Baker J."/>
            <person name="Kirchoff K."/>
            <person name="Toth K."/>
            <person name="King L."/>
            <person name="Bahret A."/>
            <person name="Miller B."/>
            <person name="Marra M.A."/>
            <person name="Martienssen R."/>
            <person name="McCombie W.R."/>
            <person name="Wilson R.K."/>
            <person name="Murphy G."/>
            <person name="Bancroft I."/>
            <person name="Volckaert G."/>
            <person name="Wambutt R."/>
            <person name="Duesterhoeft A."/>
            <person name="Stiekema W."/>
            <person name="Pohl T."/>
            <person name="Entian K.-D."/>
            <person name="Terryn N."/>
            <person name="Hartley N."/>
            <person name="Bent E."/>
            <person name="Johnson S."/>
            <person name="Langham S.-A."/>
            <person name="McCullagh B."/>
            <person name="Robben J."/>
            <person name="Grymonprez B."/>
            <person name="Zimmermann W."/>
            <person name="Ramsperger U."/>
            <person name="Wedler H."/>
            <person name="Balke K."/>
            <person name="Wedler E."/>
            <person name="Peters S."/>
            <person name="van Staveren M."/>
            <person name="Dirkse W."/>
            <person name="Mooijman P."/>
            <person name="Klein Lankhorst R."/>
            <person name="Weitzenegger T."/>
            <person name="Bothe G."/>
            <person name="Rose M."/>
            <person name="Hauf J."/>
            <person name="Berneiser S."/>
            <person name="Hempel S."/>
            <person name="Feldpausch M."/>
            <person name="Lamberth S."/>
            <person name="Villarroel R."/>
            <person name="Gielen J."/>
            <person name="Ardiles W."/>
            <person name="Bents O."/>
            <person name="Lemcke K."/>
            <person name="Kolesov G."/>
            <person name="Mayer K.F.X."/>
            <person name="Rudd S."/>
            <person name="Schoof H."/>
            <person name="Schueller C."/>
            <person name="Zaccaria P."/>
            <person name="Mewes H.-W."/>
            <person name="Bevan M."/>
            <person name="Fransz P.F."/>
        </authorList>
    </citation>
    <scope>NUCLEOTIDE SEQUENCE [LARGE SCALE GENOMIC DNA]</scope>
    <source>
        <strain>cv. Columbia</strain>
    </source>
</reference>
<reference key="3">
    <citation type="journal article" date="2017" name="Plant J.">
        <title>Araport11: a complete reannotation of the Arabidopsis thaliana reference genome.</title>
        <authorList>
            <person name="Cheng C.Y."/>
            <person name="Krishnakumar V."/>
            <person name="Chan A.P."/>
            <person name="Thibaud-Nissen F."/>
            <person name="Schobel S."/>
            <person name="Town C.D."/>
        </authorList>
    </citation>
    <scope>GENOME REANNOTATION</scope>
    <source>
        <strain>cv. Columbia</strain>
    </source>
</reference>
<reference key="4">
    <citation type="journal article" date="2012" name="Proc. Natl. Acad. Sci. U.S.A.">
        <title>CTR1 phosphorylates the central regulator EIN2 to control ethylene hormone signaling from the ER membrane to the nucleus in Arabidopsis.</title>
        <authorList>
            <person name="Ju C."/>
            <person name="Yoon G.M."/>
            <person name="Shemansky J.M."/>
            <person name="Lin D.Y."/>
            <person name="Ying Z.I."/>
            <person name="Chang J."/>
            <person name="Garrett W.M."/>
            <person name="Kessenbrock M."/>
            <person name="Groth G."/>
            <person name="Tucker M.L."/>
            <person name="Cooper B."/>
            <person name="Kieber J.J."/>
            <person name="Chang C."/>
        </authorList>
    </citation>
    <scope>FUNCTION</scope>
    <scope>INTERACTION WITH EIN2</scope>
</reference>
<reference key="5">
    <citation type="journal article" date="2015" name="PLoS Genet.">
        <title>Unsaturation of very-long-chain ceramides protects plant from hypoxia-induced damages by modulating ethylene signaling in Arabidopsis.</title>
        <authorList>
            <person name="Xie L.-J."/>
            <person name="Chen Q.-F."/>
            <person name="Chen M.-X."/>
            <person name="Yu L.-J."/>
            <person name="Huang L."/>
            <person name="Chen L."/>
            <person name="Wang F.-Z."/>
            <person name="Xia F.-N."/>
            <person name="Zhu T.-R."/>
            <person name="Wu J.-X."/>
            <person name="Yin J."/>
            <person name="Liao B."/>
            <person name="Shi J."/>
            <person name="Zhang J.-H."/>
            <person name="Aharoni A."/>
            <person name="Yao N."/>
            <person name="Shu W."/>
            <person name="Xiao S."/>
        </authorList>
    </citation>
    <scope>FUNCTION</scope>
    <scope>ACTIVITY REGULATION</scope>
    <source>
        <strain>cv. Columbia</strain>
    </source>
</reference>
<reference key="6">
    <citation type="submission" date="2010-10" db="PDB data bank">
        <title>Crystal structure of the Constitutive Triple Response 1 kinase domain from Arabidopsis thaliana.</title>
        <authorList>
            <person name="Mayerhofer H."/>
            <person name="Panneerselvam S."/>
            <person name="Mueller-Dieckmann J."/>
        </authorList>
    </citation>
    <scope>X-RAY CRYSTALLOGRAPHY (2.50 ANGSTROMS) OF 540-821</scope>
</reference>
<sequence>MEMPGRRSNYTLLSQFSDDQVSVSVTGAPPPHYDSLSSENRSNHNSGNTGKAKAERGGFDWDPSGGGGGDHRLNNQPNRVGNNMYASSLGLQRQSSGSSFGESSLSGDYYMPTLSAAANEIESVGFPQDDGFRLGFGGGGGDLRIQMAADSAGGSSSGKSWAQQTEESYQLQLALALRLSSEATCADDPNFLDPVPDESALRTSPSSAETVSHRFWVNGCLSYYDKVPDGFYMMNGLDPYIWTLCIDLHESGRIPSIESLRAVDSGVDSSLEAIIVDRRSDPAFKELHNRVHDISCSCITTKEVVDQLAKLICNRMGGPVIMGEDELVPMWKECIDGLKEIFKVVVPIGSLSVGLCRHRALLFKVLADIIDLPCRIAKGCKYCNRDDAASCLVRFGLDREYLVDLVGKPGHLWEPDSLLNGPSSISISSPLRFPRPKPVEPAVDFRLLAKQYFSDSQSLNLVFDPASDDMGFSMFHRQYDNPGGENDALAENGGGSLPPSANMPPQNMMRASNQIEAAPMNAPPISQPVPNRANRELGLDGDDMDIPWCDLNIKEKIGAGSFGTVHRAEWHGSDVAVKILMEQDFHAERVNEFLREVAIMKRLRHPNIVLFMGAVTQPPNLSIVTEYLSRGSLYRLLHKSGAREQLDERRRLSMAYDVAKGMNYLHNRNPPIVHRDLKSPNLLVDKKYTVKVCDFGLSRLKASTFLSSKSAAGTPEWMAPEVLRDEPSNEKSDVYSFGVILWELATLQQPWGNLNPAQVVAAVGFKCKRLEIPRNLNPQVAAIIEGCWTNEPWKRPSFATIMDLLRPLIKSAVPPPNRSDL</sequence>
<accession>Q05609</accession>
<gene>
    <name evidence="7" type="primary">CTR1</name>
    <name evidence="9" type="ordered locus">At5g03730</name>
    <name evidence="10" type="ORF">F17C15_150</name>
</gene>
<protein>
    <recommendedName>
        <fullName evidence="7">Serine/threonine-protein kinase CTR1</fullName>
        <ecNumber evidence="8">2.7.11.1</ecNumber>
    </recommendedName>
    <alternativeName>
        <fullName evidence="7">Protein CONSTITUTIVE TRIPLE RESPONSE1</fullName>
    </alternativeName>
</protein>
<comment type="function">
    <text evidence="4 5 6">Acts as a negative regulator in the ethylene response pathway (PubMed:8431946). Phosphorylates the cytosolic C-terminal domain of EIN2, preventing the signaling in the absence of ethylene (PubMed:23132950). Interacts with C24:1-ceramide upon hypoxic conditions (e.g. submergences) to in turn regulate EIN2 endoplasmic reticulum (ER)-to-nucleus translocation and EIN3 stabilization (PubMed:25822663).</text>
</comment>
<comment type="catalytic activity">
    <reaction>
        <text>L-seryl-[protein] + ATP = O-phospho-L-seryl-[protein] + ADP + H(+)</text>
        <dbReference type="Rhea" id="RHEA:17989"/>
        <dbReference type="Rhea" id="RHEA-COMP:9863"/>
        <dbReference type="Rhea" id="RHEA-COMP:11604"/>
        <dbReference type="ChEBI" id="CHEBI:15378"/>
        <dbReference type="ChEBI" id="CHEBI:29999"/>
        <dbReference type="ChEBI" id="CHEBI:30616"/>
        <dbReference type="ChEBI" id="CHEBI:83421"/>
        <dbReference type="ChEBI" id="CHEBI:456216"/>
        <dbReference type="EC" id="2.7.11.1"/>
    </reaction>
</comment>
<comment type="catalytic activity">
    <reaction>
        <text>L-threonyl-[protein] + ATP = O-phospho-L-threonyl-[protein] + ADP + H(+)</text>
        <dbReference type="Rhea" id="RHEA:46608"/>
        <dbReference type="Rhea" id="RHEA-COMP:11060"/>
        <dbReference type="Rhea" id="RHEA-COMP:11605"/>
        <dbReference type="ChEBI" id="CHEBI:15378"/>
        <dbReference type="ChEBI" id="CHEBI:30013"/>
        <dbReference type="ChEBI" id="CHEBI:30616"/>
        <dbReference type="ChEBI" id="CHEBI:61977"/>
        <dbReference type="ChEBI" id="CHEBI:456216"/>
        <dbReference type="EC" id="2.7.11.1"/>
    </reaction>
</comment>
<comment type="activity regulation">
    <text evidence="5">Kinase activity is inhibited by C24:1-ceramide during hypoxia (e.g. submergences).</text>
</comment>
<comment type="subunit">
    <text evidence="4">Interacts with EIN2 (via C-terminus).</text>
</comment>
<comment type="interaction">
    <interactant intactId="EBI-1606697">
        <id>Q05609</id>
    </interactant>
    <interactant intactId="EBI-1606754">
        <id>Q38846</id>
        <label>ERS1</label>
    </interactant>
    <organismsDiffer>false</organismsDiffer>
    <experiments>2</experiments>
</comment>
<comment type="interaction">
    <interactant intactId="EBI-1606697">
        <id>Q05609</id>
    </interactant>
    <interactant intactId="EBI-1606682">
        <id>P49333</id>
        <label>ETR1</label>
    </interactant>
    <organismsDiffer>false</organismsDiffer>
    <experiments>6</experiments>
</comment>
<comment type="interaction">
    <interactant intactId="EBI-1606697">
        <id>Q05609</id>
    </interactant>
    <interactant intactId="EBI-1787533">
        <id>Q0WPQ2</id>
        <label>ETR2</label>
    </interactant>
    <organismsDiffer>false</organismsDiffer>
    <experiments>2</experiments>
</comment>
<comment type="tissue specificity">
    <text evidence="6">Expressed in both seedlings and adult plants.</text>
</comment>
<comment type="disruption phenotype">
    <text evidence="6">Mutants display ethylene-treated phenotypes, resulting in plants with small, unexpanded leaves and whose seed cotyledon growth is impaired.</text>
</comment>
<comment type="similarity">
    <text evidence="8">Belongs to the protein kinase superfamily. TKL Ser/Thr protein kinase family. RAF subfamily.</text>
</comment>
<evidence type="ECO:0000255" key="1">
    <source>
        <dbReference type="PROSITE-ProRule" id="PRU00159"/>
    </source>
</evidence>
<evidence type="ECO:0000255" key="2">
    <source>
        <dbReference type="PROSITE-ProRule" id="PRU10027"/>
    </source>
</evidence>
<evidence type="ECO:0000256" key="3">
    <source>
        <dbReference type="SAM" id="MobiDB-lite"/>
    </source>
</evidence>
<evidence type="ECO:0000269" key="4">
    <source>
    </source>
</evidence>
<evidence type="ECO:0000269" key="5">
    <source>
    </source>
</evidence>
<evidence type="ECO:0000269" key="6">
    <source>
    </source>
</evidence>
<evidence type="ECO:0000303" key="7">
    <source>
    </source>
</evidence>
<evidence type="ECO:0000305" key="8"/>
<evidence type="ECO:0000312" key="9">
    <source>
        <dbReference type="Araport" id="AT5G03730"/>
    </source>
</evidence>
<evidence type="ECO:0000312" key="10">
    <source>
        <dbReference type="EMBL" id="CAB82938.1"/>
    </source>
</evidence>
<evidence type="ECO:0007829" key="11">
    <source>
        <dbReference type="PDB" id="3P86"/>
    </source>
</evidence>
<evidence type="ECO:0007829" key="12">
    <source>
        <dbReference type="PDB" id="3PPZ"/>
    </source>
</evidence>
<keyword id="KW-0002">3D-structure</keyword>
<keyword id="KW-0067">ATP-binding</keyword>
<keyword id="KW-0936">Ethylene signaling pathway</keyword>
<keyword id="KW-0418">Kinase</keyword>
<keyword id="KW-0547">Nucleotide-binding</keyword>
<keyword id="KW-1185">Reference proteome</keyword>
<keyword id="KW-0723">Serine/threonine-protein kinase</keyword>
<keyword id="KW-0808">Transferase</keyword>
<name>CTR1_ARATH</name>
<dbReference type="EC" id="2.7.11.1" evidence="8"/>
<dbReference type="EMBL" id="L08789">
    <property type="protein sequence ID" value="AAA32779.1"/>
    <property type="molecule type" value="mRNA"/>
</dbReference>
<dbReference type="EMBL" id="L08790">
    <property type="protein sequence ID" value="AAA32780.1"/>
    <property type="molecule type" value="Genomic_DNA"/>
</dbReference>
<dbReference type="EMBL" id="AL162506">
    <property type="protein sequence ID" value="CAB82938.1"/>
    <property type="molecule type" value="Genomic_DNA"/>
</dbReference>
<dbReference type="EMBL" id="CP002688">
    <property type="protein sequence ID" value="AED90647.1"/>
    <property type="molecule type" value="Genomic_DNA"/>
</dbReference>
<dbReference type="EMBL" id="CP002688">
    <property type="protein sequence ID" value="AED90648.1"/>
    <property type="molecule type" value="Genomic_DNA"/>
</dbReference>
<dbReference type="PIR" id="T48400">
    <property type="entry name" value="T48400"/>
</dbReference>
<dbReference type="RefSeq" id="NP_195993.1">
    <property type="nucleotide sequence ID" value="NM_120454.4"/>
</dbReference>
<dbReference type="RefSeq" id="NP_850760.1">
    <property type="nucleotide sequence ID" value="NM_180429.4"/>
</dbReference>
<dbReference type="PDB" id="3P86">
    <property type="method" value="X-ray"/>
    <property type="resolution" value="2.50 A"/>
    <property type="chains" value="A/B=540-821"/>
</dbReference>
<dbReference type="PDB" id="3PPZ">
    <property type="method" value="X-ray"/>
    <property type="resolution" value="2.99 A"/>
    <property type="chains" value="A/B=540-821"/>
</dbReference>
<dbReference type="PDBsum" id="3P86"/>
<dbReference type="PDBsum" id="3PPZ"/>
<dbReference type="SMR" id="Q05609"/>
<dbReference type="BioGRID" id="17024">
    <property type="interactions" value="8"/>
</dbReference>
<dbReference type="FunCoup" id="Q05609">
    <property type="interactions" value="664"/>
</dbReference>
<dbReference type="IntAct" id="Q05609">
    <property type="interactions" value="9"/>
</dbReference>
<dbReference type="STRING" id="3702.Q05609"/>
<dbReference type="iPTMnet" id="Q05609"/>
<dbReference type="PaxDb" id="3702-AT5G03730.1"/>
<dbReference type="ProteomicsDB" id="220456"/>
<dbReference type="EnsemblPlants" id="AT5G03730.1">
    <property type="protein sequence ID" value="AT5G03730.1"/>
    <property type="gene ID" value="AT5G03730"/>
</dbReference>
<dbReference type="EnsemblPlants" id="AT5G03730.2">
    <property type="protein sequence ID" value="AT5G03730.2"/>
    <property type="gene ID" value="AT5G03730"/>
</dbReference>
<dbReference type="GeneID" id="831748"/>
<dbReference type="Gramene" id="AT5G03730.1">
    <property type="protein sequence ID" value="AT5G03730.1"/>
    <property type="gene ID" value="AT5G03730"/>
</dbReference>
<dbReference type="Gramene" id="AT5G03730.2">
    <property type="protein sequence ID" value="AT5G03730.2"/>
    <property type="gene ID" value="AT5G03730"/>
</dbReference>
<dbReference type="KEGG" id="ath:AT5G03730"/>
<dbReference type="Araport" id="AT5G03730"/>
<dbReference type="TAIR" id="AT5G03730">
    <property type="gene designation" value="CTR1"/>
</dbReference>
<dbReference type="eggNOG" id="KOG0192">
    <property type="taxonomic scope" value="Eukaryota"/>
</dbReference>
<dbReference type="HOGENOM" id="CLU_006806_3_1_1"/>
<dbReference type="InParanoid" id="Q05609"/>
<dbReference type="OMA" id="SGDYYMP"/>
<dbReference type="PhylomeDB" id="Q05609"/>
<dbReference type="BRENDA" id="2.7.11.1">
    <property type="organism ID" value="399"/>
</dbReference>
<dbReference type="EvolutionaryTrace" id="Q05609"/>
<dbReference type="PRO" id="PR:Q05609"/>
<dbReference type="Proteomes" id="UP000006548">
    <property type="component" value="Chromosome 5"/>
</dbReference>
<dbReference type="ExpressionAtlas" id="Q05609">
    <property type="expression patterns" value="baseline and differential"/>
</dbReference>
<dbReference type="GO" id="GO:0005789">
    <property type="term" value="C:endoplasmic reticulum membrane"/>
    <property type="evidence" value="ECO:0000314"/>
    <property type="project" value="TAIR"/>
</dbReference>
<dbReference type="GO" id="GO:0005524">
    <property type="term" value="F:ATP binding"/>
    <property type="evidence" value="ECO:0007669"/>
    <property type="project" value="UniProtKB-KW"/>
</dbReference>
<dbReference type="GO" id="GO:0106310">
    <property type="term" value="F:protein serine kinase activity"/>
    <property type="evidence" value="ECO:0007669"/>
    <property type="project" value="RHEA"/>
</dbReference>
<dbReference type="GO" id="GO:0004674">
    <property type="term" value="F:protein serine/threonine kinase activity"/>
    <property type="evidence" value="ECO:0000314"/>
    <property type="project" value="TAIR"/>
</dbReference>
<dbReference type="GO" id="GO:0004712">
    <property type="term" value="F:protein serine/threonine/tyrosine kinase activity"/>
    <property type="evidence" value="ECO:0000250"/>
    <property type="project" value="TAIR"/>
</dbReference>
<dbReference type="GO" id="GO:0009873">
    <property type="term" value="P:ethylene-activated signaling pathway"/>
    <property type="evidence" value="ECO:0007669"/>
    <property type="project" value="UniProtKB-KW"/>
</dbReference>
<dbReference type="GO" id="GO:0009686">
    <property type="term" value="P:gibberellin biosynthetic process"/>
    <property type="evidence" value="ECO:0000315"/>
    <property type="project" value="TAIR"/>
</dbReference>
<dbReference type="GO" id="GO:0010105">
    <property type="term" value="P:negative regulation of ethylene-activated signaling pathway"/>
    <property type="evidence" value="ECO:0000304"/>
    <property type="project" value="TAIR"/>
</dbReference>
<dbReference type="GO" id="GO:0046777">
    <property type="term" value="P:protein autophosphorylation"/>
    <property type="evidence" value="ECO:0007005"/>
    <property type="project" value="TAIR"/>
</dbReference>
<dbReference type="GO" id="GO:2000069">
    <property type="term" value="P:regulation of post-embryonic root development"/>
    <property type="evidence" value="ECO:0000315"/>
    <property type="project" value="TAIR"/>
</dbReference>
<dbReference type="GO" id="GO:2000035">
    <property type="term" value="P:regulation of stem cell division"/>
    <property type="evidence" value="ECO:0000315"/>
    <property type="project" value="TAIR"/>
</dbReference>
<dbReference type="GO" id="GO:0048510">
    <property type="term" value="P:regulation of timing of transition from vegetative to reproductive phase"/>
    <property type="evidence" value="ECO:0000315"/>
    <property type="project" value="TAIR"/>
</dbReference>
<dbReference type="GO" id="GO:0009723">
    <property type="term" value="P:response to ethylene"/>
    <property type="evidence" value="ECO:0000315"/>
    <property type="project" value="TAIR"/>
</dbReference>
<dbReference type="GO" id="GO:0009750">
    <property type="term" value="P:response to fructose"/>
    <property type="evidence" value="ECO:0000315"/>
    <property type="project" value="TAIR"/>
</dbReference>
<dbReference type="GO" id="GO:0001666">
    <property type="term" value="P:response to hypoxia"/>
    <property type="evidence" value="ECO:0000315"/>
    <property type="project" value="TAIR"/>
</dbReference>
<dbReference type="GO" id="GO:0009744">
    <property type="term" value="P:response to sucrose"/>
    <property type="evidence" value="ECO:0000315"/>
    <property type="project" value="TAIR"/>
</dbReference>
<dbReference type="GO" id="GO:0010182">
    <property type="term" value="P:sugar mediated signaling pathway"/>
    <property type="evidence" value="ECO:0000304"/>
    <property type="project" value="TAIR"/>
</dbReference>
<dbReference type="CDD" id="cd13999">
    <property type="entry name" value="STKc_MAP3K-like"/>
    <property type="match status" value="1"/>
</dbReference>
<dbReference type="FunFam" id="1.10.510.10:FF:000193">
    <property type="entry name" value="Serine/threonine-protein kinase CTR1"/>
    <property type="match status" value="1"/>
</dbReference>
<dbReference type="FunFam" id="3.30.200.20:FF:000060">
    <property type="entry name" value="Serine/threonine-protein kinase isoform 1"/>
    <property type="match status" value="1"/>
</dbReference>
<dbReference type="Gene3D" id="3.30.200.20">
    <property type="entry name" value="Phosphorylase Kinase, domain 1"/>
    <property type="match status" value="1"/>
</dbReference>
<dbReference type="Gene3D" id="1.10.510.10">
    <property type="entry name" value="Transferase(Phosphotransferase) domain 1"/>
    <property type="match status" value="1"/>
</dbReference>
<dbReference type="InterPro" id="IPR055164">
    <property type="entry name" value="EDR1/CTR1/ARMC3-like_pept-like"/>
</dbReference>
<dbReference type="InterPro" id="IPR011009">
    <property type="entry name" value="Kinase-like_dom_sf"/>
</dbReference>
<dbReference type="InterPro" id="IPR000719">
    <property type="entry name" value="Prot_kinase_dom"/>
</dbReference>
<dbReference type="InterPro" id="IPR017441">
    <property type="entry name" value="Protein_kinase_ATP_BS"/>
</dbReference>
<dbReference type="InterPro" id="IPR001245">
    <property type="entry name" value="Ser-Thr/Tyr_kinase_cat_dom"/>
</dbReference>
<dbReference type="InterPro" id="IPR008271">
    <property type="entry name" value="Ser/Thr_kinase_AS"/>
</dbReference>
<dbReference type="InterPro" id="IPR051681">
    <property type="entry name" value="Ser/Thr_Kinases-Pseudokinases"/>
</dbReference>
<dbReference type="PANTHER" id="PTHR44329">
    <property type="entry name" value="SERINE/THREONINE-PROTEIN KINASE TNNI3K-RELATED"/>
    <property type="match status" value="1"/>
</dbReference>
<dbReference type="PANTHER" id="PTHR44329:SF281">
    <property type="entry name" value="SERINE_THREONINE-PROTEIN KINASE CTR1"/>
    <property type="match status" value="1"/>
</dbReference>
<dbReference type="Pfam" id="PF14381">
    <property type="entry name" value="EDR1_CTR1_ARMC3_pept"/>
    <property type="match status" value="1"/>
</dbReference>
<dbReference type="Pfam" id="PF07714">
    <property type="entry name" value="PK_Tyr_Ser-Thr"/>
    <property type="match status" value="1"/>
</dbReference>
<dbReference type="PRINTS" id="PR00109">
    <property type="entry name" value="TYRKINASE"/>
</dbReference>
<dbReference type="SMART" id="SM00220">
    <property type="entry name" value="S_TKc"/>
    <property type="match status" value="1"/>
</dbReference>
<dbReference type="SUPFAM" id="SSF56112">
    <property type="entry name" value="Protein kinase-like (PK-like)"/>
    <property type="match status" value="1"/>
</dbReference>
<dbReference type="PROSITE" id="PS00107">
    <property type="entry name" value="PROTEIN_KINASE_ATP"/>
    <property type="match status" value="1"/>
</dbReference>
<dbReference type="PROSITE" id="PS50011">
    <property type="entry name" value="PROTEIN_KINASE_DOM"/>
    <property type="match status" value="1"/>
</dbReference>
<dbReference type="PROSITE" id="PS00108">
    <property type="entry name" value="PROTEIN_KINASE_ST"/>
    <property type="match status" value="1"/>
</dbReference>
<organism>
    <name type="scientific">Arabidopsis thaliana</name>
    <name type="common">Mouse-ear cress</name>
    <dbReference type="NCBI Taxonomy" id="3702"/>
    <lineage>
        <taxon>Eukaryota</taxon>
        <taxon>Viridiplantae</taxon>
        <taxon>Streptophyta</taxon>
        <taxon>Embryophyta</taxon>
        <taxon>Tracheophyta</taxon>
        <taxon>Spermatophyta</taxon>
        <taxon>Magnoliopsida</taxon>
        <taxon>eudicotyledons</taxon>
        <taxon>Gunneridae</taxon>
        <taxon>Pentapetalae</taxon>
        <taxon>rosids</taxon>
        <taxon>malvids</taxon>
        <taxon>Brassicales</taxon>
        <taxon>Brassicaceae</taxon>
        <taxon>Camelineae</taxon>
        <taxon>Arabidopsis</taxon>
    </lineage>
</organism>